<reference key="1">
    <citation type="journal article" date="2007" name="Proc. Natl. Acad. Sci. U.S.A.">
        <title>The genome of Syntrophus aciditrophicus: life at the thermodynamic limit of microbial growth.</title>
        <authorList>
            <person name="McInerney M.J."/>
            <person name="Rohlin L."/>
            <person name="Mouttaki H."/>
            <person name="Kim U."/>
            <person name="Krupp R.S."/>
            <person name="Rios-Hernandez L."/>
            <person name="Sieber J."/>
            <person name="Struchtemeyer C.G."/>
            <person name="Bhattacharyya A."/>
            <person name="Campbell J.W."/>
            <person name="Gunsalus R.P."/>
        </authorList>
    </citation>
    <scope>NUCLEOTIDE SEQUENCE [LARGE SCALE GENOMIC DNA]</scope>
    <source>
        <strain>SB</strain>
    </source>
</reference>
<feature type="chain" id="PRO_0000297397" description="3-methyl-2-oxobutanoate hydroxymethyltransferase">
    <location>
        <begin position="1"/>
        <end position="272"/>
    </location>
</feature>
<feature type="active site" description="Proton acceptor" evidence="1">
    <location>
        <position position="189"/>
    </location>
</feature>
<feature type="binding site" evidence="1">
    <location>
        <begin position="51"/>
        <end position="52"/>
    </location>
    <ligand>
        <name>3-methyl-2-oxobutanoate</name>
        <dbReference type="ChEBI" id="CHEBI:11851"/>
    </ligand>
</feature>
<feature type="binding site" evidence="1">
    <location>
        <position position="51"/>
    </location>
    <ligand>
        <name>Mg(2+)</name>
        <dbReference type="ChEBI" id="CHEBI:18420"/>
    </ligand>
</feature>
<feature type="binding site" evidence="1">
    <location>
        <position position="90"/>
    </location>
    <ligand>
        <name>3-methyl-2-oxobutanoate</name>
        <dbReference type="ChEBI" id="CHEBI:11851"/>
    </ligand>
</feature>
<feature type="binding site" evidence="1">
    <location>
        <position position="90"/>
    </location>
    <ligand>
        <name>Mg(2+)</name>
        <dbReference type="ChEBI" id="CHEBI:18420"/>
    </ligand>
</feature>
<feature type="binding site" evidence="1">
    <location>
        <position position="120"/>
    </location>
    <ligand>
        <name>3-methyl-2-oxobutanoate</name>
        <dbReference type="ChEBI" id="CHEBI:11851"/>
    </ligand>
</feature>
<feature type="binding site" evidence="1">
    <location>
        <position position="122"/>
    </location>
    <ligand>
        <name>Mg(2+)</name>
        <dbReference type="ChEBI" id="CHEBI:18420"/>
    </ligand>
</feature>
<accession>Q2LTJ5</accession>
<comment type="function">
    <text evidence="1">Catalyzes the reversible reaction in which hydroxymethyl group from 5,10-methylenetetrahydrofolate is transferred onto alpha-ketoisovalerate to form ketopantoate.</text>
</comment>
<comment type="catalytic activity">
    <reaction evidence="1">
        <text>3-methyl-2-oxobutanoate + (6R)-5,10-methylene-5,6,7,8-tetrahydrofolate + H2O = 2-dehydropantoate + (6S)-5,6,7,8-tetrahydrofolate</text>
        <dbReference type="Rhea" id="RHEA:11824"/>
        <dbReference type="ChEBI" id="CHEBI:11561"/>
        <dbReference type="ChEBI" id="CHEBI:11851"/>
        <dbReference type="ChEBI" id="CHEBI:15377"/>
        <dbReference type="ChEBI" id="CHEBI:15636"/>
        <dbReference type="ChEBI" id="CHEBI:57453"/>
        <dbReference type="EC" id="2.1.2.11"/>
    </reaction>
</comment>
<comment type="cofactor">
    <cofactor evidence="1">
        <name>Mg(2+)</name>
        <dbReference type="ChEBI" id="CHEBI:18420"/>
    </cofactor>
    <text evidence="1">Binds 1 Mg(2+) ion per subunit.</text>
</comment>
<comment type="pathway">
    <text evidence="1">Cofactor biosynthesis; (R)-pantothenate biosynthesis; (R)-pantoate from 3-methyl-2-oxobutanoate: step 1/2.</text>
</comment>
<comment type="subunit">
    <text evidence="1">Homodecamer; pentamer of dimers.</text>
</comment>
<comment type="subcellular location">
    <subcellularLocation>
        <location evidence="1">Cytoplasm</location>
    </subcellularLocation>
</comment>
<comment type="similarity">
    <text evidence="1">Belongs to the PanB family.</text>
</comment>
<comment type="sequence caution" evidence="2">
    <conflict type="erroneous initiation">
        <sequence resource="EMBL-CDS" id="ABC77402"/>
    </conflict>
</comment>
<evidence type="ECO:0000255" key="1">
    <source>
        <dbReference type="HAMAP-Rule" id="MF_00156"/>
    </source>
</evidence>
<evidence type="ECO:0000305" key="2"/>
<name>PANB_SYNAS</name>
<gene>
    <name evidence="1" type="primary">panB</name>
    <name type="ordered locus">SYNAS_15230</name>
    <name type="ORF">SYN_02773</name>
</gene>
<organism>
    <name type="scientific">Syntrophus aciditrophicus (strain SB)</name>
    <dbReference type="NCBI Taxonomy" id="56780"/>
    <lineage>
        <taxon>Bacteria</taxon>
        <taxon>Pseudomonadati</taxon>
        <taxon>Thermodesulfobacteriota</taxon>
        <taxon>Syntrophia</taxon>
        <taxon>Syntrophales</taxon>
        <taxon>Syntrophaceae</taxon>
        <taxon>Syntrophus</taxon>
    </lineage>
</organism>
<sequence>MSTQSKGRKITTSVIRGMKKKGEKITMLTAYDYAMASLLDEVGVEMLLVGDSLGMVVLGYESTLPVTMNDMLHHTRAVSRGANNAMVVADLPFMSYQCSVEEAVRNAGRFLQEAGAHAVKLEGGREIAESVKRMTVSGIPVVGHLGLTPQSVQQFGGFKVQGKGDAAAQRIMEDAKIIEEAGAFSVVLECVPAPLAQRITDDLAIPTIGIGAGAGCDGQVLVVNDMLGIYERFTPKFVKKYANLSDNIRGAVKQYIEEVKNGTFPDQDHSFL</sequence>
<keyword id="KW-0963">Cytoplasm</keyword>
<keyword id="KW-0460">Magnesium</keyword>
<keyword id="KW-0479">Metal-binding</keyword>
<keyword id="KW-0566">Pantothenate biosynthesis</keyword>
<keyword id="KW-1185">Reference proteome</keyword>
<keyword id="KW-0808">Transferase</keyword>
<proteinExistence type="inferred from homology"/>
<dbReference type="EC" id="2.1.2.11" evidence="1"/>
<dbReference type="EMBL" id="CP000252">
    <property type="protein sequence ID" value="ABC77402.1"/>
    <property type="status" value="ALT_INIT"/>
    <property type="molecule type" value="Genomic_DNA"/>
</dbReference>
<dbReference type="RefSeq" id="WP_041584852.1">
    <property type="nucleotide sequence ID" value="NC_007759.1"/>
</dbReference>
<dbReference type="SMR" id="Q2LTJ5"/>
<dbReference type="FunCoup" id="Q2LTJ5">
    <property type="interactions" value="404"/>
</dbReference>
<dbReference type="STRING" id="56780.SYN_02773"/>
<dbReference type="KEGG" id="sat:SYN_02773"/>
<dbReference type="eggNOG" id="COG0413">
    <property type="taxonomic scope" value="Bacteria"/>
</dbReference>
<dbReference type="HOGENOM" id="CLU_036645_1_0_7"/>
<dbReference type="InParanoid" id="Q2LTJ5"/>
<dbReference type="OrthoDB" id="9781789at2"/>
<dbReference type="UniPathway" id="UPA00028">
    <property type="reaction ID" value="UER00003"/>
</dbReference>
<dbReference type="Proteomes" id="UP000001933">
    <property type="component" value="Chromosome"/>
</dbReference>
<dbReference type="GO" id="GO:0005737">
    <property type="term" value="C:cytoplasm"/>
    <property type="evidence" value="ECO:0007669"/>
    <property type="project" value="UniProtKB-SubCell"/>
</dbReference>
<dbReference type="GO" id="GO:0003864">
    <property type="term" value="F:3-methyl-2-oxobutanoate hydroxymethyltransferase activity"/>
    <property type="evidence" value="ECO:0007669"/>
    <property type="project" value="UniProtKB-UniRule"/>
</dbReference>
<dbReference type="GO" id="GO:0000287">
    <property type="term" value="F:magnesium ion binding"/>
    <property type="evidence" value="ECO:0007669"/>
    <property type="project" value="TreeGrafter"/>
</dbReference>
<dbReference type="GO" id="GO:0015940">
    <property type="term" value="P:pantothenate biosynthetic process"/>
    <property type="evidence" value="ECO:0007669"/>
    <property type="project" value="UniProtKB-UniRule"/>
</dbReference>
<dbReference type="CDD" id="cd06557">
    <property type="entry name" value="KPHMT-like"/>
    <property type="match status" value="1"/>
</dbReference>
<dbReference type="FunFam" id="3.20.20.60:FF:000003">
    <property type="entry name" value="3-methyl-2-oxobutanoate hydroxymethyltransferase"/>
    <property type="match status" value="1"/>
</dbReference>
<dbReference type="Gene3D" id="3.20.20.60">
    <property type="entry name" value="Phosphoenolpyruvate-binding domains"/>
    <property type="match status" value="1"/>
</dbReference>
<dbReference type="HAMAP" id="MF_00156">
    <property type="entry name" value="PanB"/>
    <property type="match status" value="1"/>
</dbReference>
<dbReference type="InterPro" id="IPR003700">
    <property type="entry name" value="Pantoate_hydroxy_MeTrfase"/>
</dbReference>
<dbReference type="InterPro" id="IPR015813">
    <property type="entry name" value="Pyrv/PenolPyrv_kinase-like_dom"/>
</dbReference>
<dbReference type="InterPro" id="IPR040442">
    <property type="entry name" value="Pyrv_kinase-like_dom_sf"/>
</dbReference>
<dbReference type="NCBIfam" id="TIGR00222">
    <property type="entry name" value="panB"/>
    <property type="match status" value="1"/>
</dbReference>
<dbReference type="NCBIfam" id="NF001452">
    <property type="entry name" value="PRK00311.1"/>
    <property type="match status" value="1"/>
</dbReference>
<dbReference type="PANTHER" id="PTHR20881">
    <property type="entry name" value="3-METHYL-2-OXOBUTANOATE HYDROXYMETHYLTRANSFERASE"/>
    <property type="match status" value="1"/>
</dbReference>
<dbReference type="PANTHER" id="PTHR20881:SF0">
    <property type="entry name" value="3-METHYL-2-OXOBUTANOATE HYDROXYMETHYLTRANSFERASE"/>
    <property type="match status" value="1"/>
</dbReference>
<dbReference type="Pfam" id="PF02548">
    <property type="entry name" value="Pantoate_transf"/>
    <property type="match status" value="1"/>
</dbReference>
<dbReference type="PIRSF" id="PIRSF000388">
    <property type="entry name" value="Pantoate_hydroxy_MeTrfase"/>
    <property type="match status" value="1"/>
</dbReference>
<dbReference type="SUPFAM" id="SSF51621">
    <property type="entry name" value="Phosphoenolpyruvate/pyruvate domain"/>
    <property type="match status" value="1"/>
</dbReference>
<protein>
    <recommendedName>
        <fullName evidence="1">3-methyl-2-oxobutanoate hydroxymethyltransferase</fullName>
        <ecNumber evidence="1">2.1.2.11</ecNumber>
    </recommendedName>
    <alternativeName>
        <fullName evidence="1">Ketopantoate hydroxymethyltransferase</fullName>
        <shortName evidence="1">KPHMT</shortName>
    </alternativeName>
</protein>